<keyword id="KW-0963">Cytoplasm</keyword>
<keyword id="KW-0378">Hydrolase</keyword>
<keyword id="KW-0645">Protease</keyword>
<keyword id="KW-0720">Serine protease</keyword>
<name>CLPP_STRZT</name>
<reference key="1">
    <citation type="journal article" date="2010" name="Genome Biol.">
        <title>Structure and dynamics of the pan-genome of Streptococcus pneumoniae and closely related species.</title>
        <authorList>
            <person name="Donati C."/>
            <person name="Hiller N.L."/>
            <person name="Tettelin H."/>
            <person name="Muzzi A."/>
            <person name="Croucher N.J."/>
            <person name="Angiuoli S.V."/>
            <person name="Oggioni M."/>
            <person name="Dunning Hotopp J.C."/>
            <person name="Hu F.Z."/>
            <person name="Riley D.R."/>
            <person name="Covacci A."/>
            <person name="Mitchell T.J."/>
            <person name="Bentley S.D."/>
            <person name="Kilian M."/>
            <person name="Ehrlich G.D."/>
            <person name="Rappuoli R."/>
            <person name="Moxon E.R."/>
            <person name="Masignani V."/>
        </authorList>
    </citation>
    <scope>NUCLEOTIDE SEQUENCE [LARGE SCALE GENOMIC DNA]</scope>
    <source>
        <strain>Taiwan19F-14</strain>
    </source>
</reference>
<comment type="function">
    <text evidence="1">Cleaves peptides in various proteins in a process that requires ATP hydrolysis. Has a chymotrypsin-like activity. Plays a major role in the degradation of misfolded proteins.</text>
</comment>
<comment type="catalytic activity">
    <reaction evidence="1">
        <text>Hydrolysis of proteins to small peptides in the presence of ATP and magnesium. alpha-casein is the usual test substrate. In the absence of ATP, only oligopeptides shorter than five residues are hydrolyzed (such as succinyl-Leu-Tyr-|-NHMec, and Leu-Tyr-Leu-|-Tyr-Trp, in which cleavage of the -Tyr-|-Leu- and -Tyr-|-Trp bonds also occurs).</text>
        <dbReference type="EC" id="3.4.21.92"/>
    </reaction>
</comment>
<comment type="subunit">
    <text evidence="1">Fourteen ClpP subunits assemble into 2 heptameric rings which stack back to back to give a disk-like structure with a central cavity, resembling the structure of eukaryotic proteasomes.</text>
</comment>
<comment type="subcellular location">
    <subcellularLocation>
        <location evidence="1">Cytoplasm</location>
    </subcellularLocation>
</comment>
<comment type="similarity">
    <text evidence="1">Belongs to the peptidase S14 family.</text>
</comment>
<feature type="chain" id="PRO_1000135171" description="ATP-dependent Clp protease proteolytic subunit">
    <location>
        <begin position="1"/>
        <end position="196"/>
    </location>
</feature>
<feature type="active site" description="Nucleophile" evidence="1">
    <location>
        <position position="96"/>
    </location>
</feature>
<feature type="active site" evidence="1">
    <location>
        <position position="121"/>
    </location>
</feature>
<dbReference type="EC" id="3.4.21.92" evidence="1"/>
<dbReference type="EMBL" id="CP000921">
    <property type="protein sequence ID" value="ACO23127.1"/>
    <property type="molecule type" value="Genomic_DNA"/>
</dbReference>
<dbReference type="RefSeq" id="WP_000613477.1">
    <property type="nucleotide sequence ID" value="NC_012469.1"/>
</dbReference>
<dbReference type="SMR" id="C1CQK8"/>
<dbReference type="MEROPS" id="S14.001"/>
<dbReference type="KEGG" id="snt:SPT_0761"/>
<dbReference type="HOGENOM" id="CLU_058707_3_2_9"/>
<dbReference type="GO" id="GO:0005737">
    <property type="term" value="C:cytoplasm"/>
    <property type="evidence" value="ECO:0007669"/>
    <property type="project" value="UniProtKB-SubCell"/>
</dbReference>
<dbReference type="GO" id="GO:0009368">
    <property type="term" value="C:endopeptidase Clp complex"/>
    <property type="evidence" value="ECO:0007669"/>
    <property type="project" value="TreeGrafter"/>
</dbReference>
<dbReference type="GO" id="GO:0004176">
    <property type="term" value="F:ATP-dependent peptidase activity"/>
    <property type="evidence" value="ECO:0007669"/>
    <property type="project" value="InterPro"/>
</dbReference>
<dbReference type="GO" id="GO:0051117">
    <property type="term" value="F:ATPase binding"/>
    <property type="evidence" value="ECO:0007669"/>
    <property type="project" value="TreeGrafter"/>
</dbReference>
<dbReference type="GO" id="GO:0004252">
    <property type="term" value="F:serine-type endopeptidase activity"/>
    <property type="evidence" value="ECO:0007669"/>
    <property type="project" value="UniProtKB-UniRule"/>
</dbReference>
<dbReference type="GO" id="GO:0006515">
    <property type="term" value="P:protein quality control for misfolded or incompletely synthesized proteins"/>
    <property type="evidence" value="ECO:0007669"/>
    <property type="project" value="TreeGrafter"/>
</dbReference>
<dbReference type="CDD" id="cd07017">
    <property type="entry name" value="S14_ClpP_2"/>
    <property type="match status" value="1"/>
</dbReference>
<dbReference type="FunFam" id="3.90.226.10:FF:000014">
    <property type="entry name" value="ATP-dependent Clp protease proteolytic subunit"/>
    <property type="match status" value="1"/>
</dbReference>
<dbReference type="Gene3D" id="3.90.226.10">
    <property type="entry name" value="2-enoyl-CoA Hydratase, Chain A, domain 1"/>
    <property type="match status" value="1"/>
</dbReference>
<dbReference type="HAMAP" id="MF_00444">
    <property type="entry name" value="ClpP"/>
    <property type="match status" value="1"/>
</dbReference>
<dbReference type="InterPro" id="IPR001907">
    <property type="entry name" value="ClpP"/>
</dbReference>
<dbReference type="InterPro" id="IPR029045">
    <property type="entry name" value="ClpP/crotonase-like_dom_sf"/>
</dbReference>
<dbReference type="InterPro" id="IPR023562">
    <property type="entry name" value="ClpP/TepA"/>
</dbReference>
<dbReference type="InterPro" id="IPR033135">
    <property type="entry name" value="ClpP_His_AS"/>
</dbReference>
<dbReference type="InterPro" id="IPR018215">
    <property type="entry name" value="ClpP_Ser_AS"/>
</dbReference>
<dbReference type="NCBIfam" id="NF001368">
    <property type="entry name" value="PRK00277.1"/>
    <property type="match status" value="1"/>
</dbReference>
<dbReference type="NCBIfam" id="NF009205">
    <property type="entry name" value="PRK12553.1"/>
    <property type="match status" value="1"/>
</dbReference>
<dbReference type="PANTHER" id="PTHR10381">
    <property type="entry name" value="ATP-DEPENDENT CLP PROTEASE PROTEOLYTIC SUBUNIT"/>
    <property type="match status" value="1"/>
</dbReference>
<dbReference type="PANTHER" id="PTHR10381:SF70">
    <property type="entry name" value="ATP-DEPENDENT CLP PROTEASE PROTEOLYTIC SUBUNIT"/>
    <property type="match status" value="1"/>
</dbReference>
<dbReference type="Pfam" id="PF00574">
    <property type="entry name" value="CLP_protease"/>
    <property type="match status" value="1"/>
</dbReference>
<dbReference type="PRINTS" id="PR00127">
    <property type="entry name" value="CLPPROTEASEP"/>
</dbReference>
<dbReference type="SUPFAM" id="SSF52096">
    <property type="entry name" value="ClpP/crotonase"/>
    <property type="match status" value="1"/>
</dbReference>
<dbReference type="PROSITE" id="PS00382">
    <property type="entry name" value="CLP_PROTEASE_HIS"/>
    <property type="match status" value="1"/>
</dbReference>
<dbReference type="PROSITE" id="PS00381">
    <property type="entry name" value="CLP_PROTEASE_SER"/>
    <property type="match status" value="1"/>
</dbReference>
<evidence type="ECO:0000255" key="1">
    <source>
        <dbReference type="HAMAP-Rule" id="MF_00444"/>
    </source>
</evidence>
<organism>
    <name type="scientific">Streptococcus pneumoniae (strain Taiwan19F-14)</name>
    <dbReference type="NCBI Taxonomy" id="487213"/>
    <lineage>
        <taxon>Bacteria</taxon>
        <taxon>Bacillati</taxon>
        <taxon>Bacillota</taxon>
        <taxon>Bacilli</taxon>
        <taxon>Lactobacillales</taxon>
        <taxon>Streptococcaceae</taxon>
        <taxon>Streptococcus</taxon>
    </lineage>
</organism>
<sequence length="196" mass="21358">MIPVVIEQTSRGERSYDIYSRLLKDRIIMLTGPVEDNMANSVIAQLLFLDAQDSTKDIYLYVNTPGGSVSAGLAIVDTMNFIKADVQTIVMGMAASMGTVIASSGAKGKRFMLPNAEYMIHQPMGGTGGGTQQTDMAIAAEHLLKTRNTLEKILAENSGQSMEKVHADAERDNWMSAQETLEYGFIDEIMANNSLN</sequence>
<proteinExistence type="inferred from homology"/>
<accession>C1CQK8</accession>
<gene>
    <name evidence="1" type="primary">clpP</name>
    <name type="ordered locus">SPT_0761</name>
</gene>
<protein>
    <recommendedName>
        <fullName evidence="1">ATP-dependent Clp protease proteolytic subunit</fullName>
        <ecNumber evidence="1">3.4.21.92</ecNumber>
    </recommendedName>
    <alternativeName>
        <fullName evidence="1">Endopeptidase Clp</fullName>
    </alternativeName>
</protein>